<name>HFQ_SHEB5</name>
<sequence>MAKGQSLQDPFLNALRRERVPVSIYLVNGIKLQGQVESFDQFVILLKNTVSQMVYKHAISTVVPARPFNVTGHQNAQGGYGAQDDAPSGE</sequence>
<proteinExistence type="inferred from homology"/>
<organism>
    <name type="scientific">Shewanella baltica (strain OS155 / ATCC BAA-1091)</name>
    <dbReference type="NCBI Taxonomy" id="325240"/>
    <lineage>
        <taxon>Bacteria</taxon>
        <taxon>Pseudomonadati</taxon>
        <taxon>Pseudomonadota</taxon>
        <taxon>Gammaproteobacteria</taxon>
        <taxon>Alteromonadales</taxon>
        <taxon>Shewanellaceae</taxon>
        <taxon>Shewanella</taxon>
    </lineage>
</organism>
<keyword id="KW-1185">Reference proteome</keyword>
<keyword id="KW-0694">RNA-binding</keyword>
<keyword id="KW-0346">Stress response</keyword>
<reference key="1">
    <citation type="submission" date="2007-02" db="EMBL/GenBank/DDBJ databases">
        <title>Complete sequence of chromosome of Shewanella baltica OS155.</title>
        <authorList>
            <consortium name="US DOE Joint Genome Institute"/>
            <person name="Copeland A."/>
            <person name="Lucas S."/>
            <person name="Lapidus A."/>
            <person name="Barry K."/>
            <person name="Detter J.C."/>
            <person name="Glavina del Rio T."/>
            <person name="Hammon N."/>
            <person name="Israni S."/>
            <person name="Dalin E."/>
            <person name="Tice H."/>
            <person name="Pitluck S."/>
            <person name="Sims D.R."/>
            <person name="Brettin T."/>
            <person name="Bruce D."/>
            <person name="Han C."/>
            <person name="Tapia R."/>
            <person name="Brainard J."/>
            <person name="Schmutz J."/>
            <person name="Larimer F."/>
            <person name="Land M."/>
            <person name="Hauser L."/>
            <person name="Kyrpides N."/>
            <person name="Mikhailova N."/>
            <person name="Brettar I."/>
            <person name="Klappenbach J."/>
            <person name="Konstantinidis K."/>
            <person name="Rodrigues J."/>
            <person name="Tiedje J."/>
            <person name="Richardson P."/>
        </authorList>
    </citation>
    <scope>NUCLEOTIDE SEQUENCE [LARGE SCALE GENOMIC DNA]</scope>
    <source>
        <strain>OS155 / ATCC BAA-1091</strain>
    </source>
</reference>
<comment type="function">
    <text evidence="1">RNA chaperone that binds small regulatory RNA (sRNAs) and mRNAs to facilitate mRNA translational regulation in response to envelope stress, environmental stress and changes in metabolite concentrations. Also binds with high specificity to tRNAs.</text>
</comment>
<comment type="subunit">
    <text evidence="1">Homohexamer.</text>
</comment>
<comment type="similarity">
    <text evidence="1">Belongs to the Hfq family.</text>
</comment>
<gene>
    <name evidence="1" type="primary">hfq</name>
    <name type="ordered locus">Sbal_0558</name>
</gene>
<dbReference type="EMBL" id="CP000563">
    <property type="protein sequence ID" value="ABN60087.1"/>
    <property type="molecule type" value="Genomic_DNA"/>
</dbReference>
<dbReference type="RefSeq" id="WP_006084207.1">
    <property type="nucleotide sequence ID" value="NC_009052.1"/>
</dbReference>
<dbReference type="SMR" id="A3D024"/>
<dbReference type="STRING" id="325240.Sbal_0558"/>
<dbReference type="GeneID" id="11773899"/>
<dbReference type="KEGG" id="sbl:Sbal_0558"/>
<dbReference type="HOGENOM" id="CLU_113688_2_2_6"/>
<dbReference type="OrthoDB" id="9799751at2"/>
<dbReference type="Proteomes" id="UP000001557">
    <property type="component" value="Chromosome"/>
</dbReference>
<dbReference type="GO" id="GO:0005829">
    <property type="term" value="C:cytosol"/>
    <property type="evidence" value="ECO:0007669"/>
    <property type="project" value="TreeGrafter"/>
</dbReference>
<dbReference type="GO" id="GO:0003723">
    <property type="term" value="F:RNA binding"/>
    <property type="evidence" value="ECO:0007669"/>
    <property type="project" value="UniProtKB-UniRule"/>
</dbReference>
<dbReference type="GO" id="GO:0006355">
    <property type="term" value="P:regulation of DNA-templated transcription"/>
    <property type="evidence" value="ECO:0007669"/>
    <property type="project" value="InterPro"/>
</dbReference>
<dbReference type="GO" id="GO:0043487">
    <property type="term" value="P:regulation of RNA stability"/>
    <property type="evidence" value="ECO:0007669"/>
    <property type="project" value="TreeGrafter"/>
</dbReference>
<dbReference type="GO" id="GO:0045974">
    <property type="term" value="P:regulation of translation, ncRNA-mediated"/>
    <property type="evidence" value="ECO:0007669"/>
    <property type="project" value="TreeGrafter"/>
</dbReference>
<dbReference type="CDD" id="cd01716">
    <property type="entry name" value="Hfq"/>
    <property type="match status" value="1"/>
</dbReference>
<dbReference type="FunFam" id="2.30.30.100:FF:000001">
    <property type="entry name" value="RNA-binding protein Hfq"/>
    <property type="match status" value="1"/>
</dbReference>
<dbReference type="Gene3D" id="2.30.30.100">
    <property type="match status" value="1"/>
</dbReference>
<dbReference type="HAMAP" id="MF_00436">
    <property type="entry name" value="Hfq"/>
    <property type="match status" value="1"/>
</dbReference>
<dbReference type="InterPro" id="IPR005001">
    <property type="entry name" value="Hfq"/>
</dbReference>
<dbReference type="InterPro" id="IPR010920">
    <property type="entry name" value="LSM_dom_sf"/>
</dbReference>
<dbReference type="InterPro" id="IPR047575">
    <property type="entry name" value="Sm"/>
</dbReference>
<dbReference type="NCBIfam" id="TIGR02383">
    <property type="entry name" value="Hfq"/>
    <property type="match status" value="1"/>
</dbReference>
<dbReference type="NCBIfam" id="NF001602">
    <property type="entry name" value="PRK00395.1"/>
    <property type="match status" value="1"/>
</dbReference>
<dbReference type="PANTHER" id="PTHR34772">
    <property type="entry name" value="RNA-BINDING PROTEIN HFQ"/>
    <property type="match status" value="1"/>
</dbReference>
<dbReference type="PANTHER" id="PTHR34772:SF1">
    <property type="entry name" value="RNA-BINDING PROTEIN HFQ"/>
    <property type="match status" value="1"/>
</dbReference>
<dbReference type="Pfam" id="PF17209">
    <property type="entry name" value="Hfq"/>
    <property type="match status" value="1"/>
</dbReference>
<dbReference type="SUPFAM" id="SSF50182">
    <property type="entry name" value="Sm-like ribonucleoproteins"/>
    <property type="match status" value="1"/>
</dbReference>
<dbReference type="PROSITE" id="PS52002">
    <property type="entry name" value="SM"/>
    <property type="match status" value="1"/>
</dbReference>
<accession>A3D024</accession>
<evidence type="ECO:0000255" key="1">
    <source>
        <dbReference type="HAMAP-Rule" id="MF_00436"/>
    </source>
</evidence>
<evidence type="ECO:0000255" key="2">
    <source>
        <dbReference type="PROSITE-ProRule" id="PRU01346"/>
    </source>
</evidence>
<protein>
    <recommendedName>
        <fullName evidence="1">RNA-binding protein Hfq</fullName>
    </recommendedName>
</protein>
<feature type="chain" id="PRO_1000025933" description="RNA-binding protein Hfq">
    <location>
        <begin position="1"/>
        <end position="90"/>
    </location>
</feature>
<feature type="domain" description="Sm" evidence="2">
    <location>
        <begin position="9"/>
        <end position="68"/>
    </location>
</feature>